<proteinExistence type="inferred from homology"/>
<name>VE2_HPV20</name>
<protein>
    <recommendedName>
        <fullName evidence="1">Regulatory protein E2</fullName>
    </recommendedName>
</protein>
<feature type="chain" id="PRO_0000133199" description="Regulatory protein E2">
    <location>
        <begin position="1"/>
        <end position="497"/>
    </location>
</feature>
<feature type="region of interest" description="Transactivation domain" evidence="1">
    <location>
        <begin position="1"/>
        <end position="201"/>
    </location>
</feature>
<feature type="region of interest" description="Disordered" evidence="2">
    <location>
        <begin position="197"/>
        <end position="393"/>
    </location>
</feature>
<feature type="region of interest" description="DNA-binding domain" evidence="1">
    <location>
        <begin position="413"/>
        <end position="497"/>
    </location>
</feature>
<feature type="compositionally biased region" description="Low complexity" evidence="2">
    <location>
        <begin position="215"/>
        <end position="230"/>
    </location>
</feature>
<feature type="compositionally biased region" description="Basic residues" evidence="2">
    <location>
        <begin position="242"/>
        <end position="287"/>
    </location>
</feature>
<feature type="compositionally biased region" description="Basic residues" evidence="2">
    <location>
        <begin position="295"/>
        <end position="305"/>
    </location>
</feature>
<feature type="compositionally biased region" description="Low complexity" evidence="2">
    <location>
        <begin position="315"/>
        <end position="341"/>
    </location>
</feature>
<organismHost>
    <name type="scientific">Homo sapiens</name>
    <name type="common">Human</name>
    <dbReference type="NCBI Taxonomy" id="9606"/>
</organismHost>
<organism>
    <name type="scientific">Human papillomavirus 20</name>
    <dbReference type="NCBI Taxonomy" id="31547"/>
    <lineage>
        <taxon>Viruses</taxon>
        <taxon>Monodnaviria</taxon>
        <taxon>Shotokuvirae</taxon>
        <taxon>Cossaviricota</taxon>
        <taxon>Papovaviricetes</taxon>
        <taxon>Zurhausenvirales</taxon>
        <taxon>Papillomaviridae</taxon>
        <taxon>Firstpapillomavirinae</taxon>
        <taxon>Betapapillomavirus</taxon>
        <taxon>Betapapillomavirus 1</taxon>
    </lineage>
</organism>
<dbReference type="EMBL" id="U31778">
    <property type="protein sequence ID" value="AAA79390.1"/>
    <property type="molecule type" value="Genomic_DNA"/>
</dbReference>
<dbReference type="SMR" id="P50766"/>
<dbReference type="Proteomes" id="UP000008230">
    <property type="component" value="Genome"/>
</dbReference>
<dbReference type="GO" id="GO:0042025">
    <property type="term" value="C:host cell nucleus"/>
    <property type="evidence" value="ECO:0007669"/>
    <property type="project" value="UniProtKB-SubCell"/>
</dbReference>
<dbReference type="GO" id="GO:0003677">
    <property type="term" value="F:DNA binding"/>
    <property type="evidence" value="ECO:0007669"/>
    <property type="project" value="UniProtKB-UniRule"/>
</dbReference>
<dbReference type="GO" id="GO:0003700">
    <property type="term" value="F:DNA-binding transcription factor activity"/>
    <property type="evidence" value="ECO:0007669"/>
    <property type="project" value="UniProtKB-UniRule"/>
</dbReference>
<dbReference type="GO" id="GO:0000166">
    <property type="term" value="F:nucleotide binding"/>
    <property type="evidence" value="ECO:0007669"/>
    <property type="project" value="UniProtKB-UniRule"/>
</dbReference>
<dbReference type="GO" id="GO:0006260">
    <property type="term" value="P:DNA replication"/>
    <property type="evidence" value="ECO:0007669"/>
    <property type="project" value="UniProtKB-KW"/>
</dbReference>
<dbReference type="GO" id="GO:0006351">
    <property type="term" value="P:DNA-templated transcription"/>
    <property type="evidence" value="ECO:0007669"/>
    <property type="project" value="UniProtKB-UniRule"/>
</dbReference>
<dbReference type="GO" id="GO:0006275">
    <property type="term" value="P:regulation of DNA replication"/>
    <property type="evidence" value="ECO:0007669"/>
    <property type="project" value="UniProtKB-UniRule"/>
</dbReference>
<dbReference type="GO" id="GO:0039693">
    <property type="term" value="P:viral DNA genome replication"/>
    <property type="evidence" value="ECO:0007669"/>
    <property type="project" value="UniProtKB-UniRule"/>
</dbReference>
<dbReference type="Gene3D" id="3.30.70.330">
    <property type="match status" value="1"/>
</dbReference>
<dbReference type="Gene3D" id="1.10.287.30">
    <property type="entry name" value="E2 (early) protein, N terminal domain, subdomain 1"/>
    <property type="match status" value="1"/>
</dbReference>
<dbReference type="Gene3D" id="2.170.200.10">
    <property type="entry name" value="Papillomavirus E2 early protein domain"/>
    <property type="match status" value="1"/>
</dbReference>
<dbReference type="HAMAP" id="MF_04001">
    <property type="entry name" value="PPV_E2"/>
    <property type="match status" value="1"/>
</dbReference>
<dbReference type="InterPro" id="IPR035975">
    <property type="entry name" value="E2/EBNA1_C_sf"/>
</dbReference>
<dbReference type="InterPro" id="IPR012677">
    <property type="entry name" value="Nucleotide-bd_a/b_plait_sf"/>
</dbReference>
<dbReference type="InterPro" id="IPR000427">
    <property type="entry name" value="Papillomavirus_E2_C"/>
</dbReference>
<dbReference type="InterPro" id="IPR001866">
    <property type="entry name" value="PPV_E2_N"/>
</dbReference>
<dbReference type="InterPro" id="IPR033668">
    <property type="entry name" value="Reg_prot_E2"/>
</dbReference>
<dbReference type="InterPro" id="IPR036050">
    <property type="entry name" value="Regulatory_protein_E2_N"/>
</dbReference>
<dbReference type="InterPro" id="IPR042503">
    <property type="entry name" value="Regulatory_protein_E2_N_1"/>
</dbReference>
<dbReference type="InterPro" id="IPR042504">
    <property type="entry name" value="Regulatory_protein_E2_N_2"/>
</dbReference>
<dbReference type="Pfam" id="PF00511">
    <property type="entry name" value="PPV_E2_C"/>
    <property type="match status" value="1"/>
</dbReference>
<dbReference type="Pfam" id="PF00508">
    <property type="entry name" value="PPV_E2_N"/>
    <property type="match status" value="1"/>
</dbReference>
<dbReference type="SUPFAM" id="SSF51332">
    <property type="entry name" value="E2 regulatory, transactivation domain"/>
    <property type="match status" value="1"/>
</dbReference>
<dbReference type="SUPFAM" id="SSF54957">
    <property type="entry name" value="Viral DNA-binding domain"/>
    <property type="match status" value="1"/>
</dbReference>
<comment type="function">
    <text evidence="1">Plays a role in the initiation of viral DNA replication. A dimer of E2 interacts with a dimer of E1 in order to improve specificity of E1 DNA binding activity. Once the complex recognizes and binds DNA at specific sites, the E2 dimer is removed from DNA. E2 also regulates viral transcription through binding to the E2RE response element (5'-ACCNNNNNNGGT-3') present in multiple copies in the regulatory regions of the viral genome. Activates or represses transcription depending on E2RE's position with regards to proximal promoter elements including the TATA-box. Repression occurs by sterically hindering the assembly of the transcription initiation complex.</text>
</comment>
<comment type="subunit">
    <text evidence="1">Binds DNA as homodimer. Interacts with protein E1; this interaction greatly increases E1 DNA-binding activity. Interacts with protein L1; this interaction enhances E2-dependent replication and transcription activation. Interacts with protein L2; this interaction inhibits E2 transcriptional activity but not DNA replication function E2. Interacts with protein E7; this interaction inhibits E7 oncogenic activity. Interacts with host TAF1; this interaction modulates E2-dependent transcriptional regulation. Interacts with host BRD4; this interaction mediates E2 transcriptional activation function. Additionally, the interaction with host BRD4 on mitotic chromosomes mediates tethering of the viral genome. Interacts with host TOPBP1; this interaction is required for optimal viral DNA replication.</text>
</comment>
<comment type="subcellular location">
    <subcellularLocation>
        <location evidence="1">Host nucleus</location>
    </subcellularLocation>
</comment>
<comment type="PTM">
    <text evidence="1">Phosphorylated.</text>
</comment>
<comment type="similarity">
    <text evidence="1">Belongs to the papillomaviridae E2 protein family.</text>
</comment>
<reference key="1">
    <citation type="submission" date="1995-10" db="EMBL/GenBank/DDBJ databases">
        <authorList>
            <person name="Delius H."/>
        </authorList>
    </citation>
    <scope>NUCLEOTIDE SEQUENCE [GENOMIC DNA]</scope>
</reference>
<gene>
    <name evidence="1" type="primary">E2</name>
</gene>
<sequence length="497" mass="56120">MENLSKRFNALQDQLMNIYESAPDTLESQIEHWQTLRKEAVLLYFARQHGISRVGYQPVPVLAVSEAKAKQAIGMVLRLQSLQKSEYGSEPWSLVDASAETFRSPPENHFKKGPISVEVIYDKDKDNANAYTMWRFVYYQDDDDKWHKSASGVNQTGIYFMQGTFRHYYVLFADDASRYSTTGQWEVKVNKETVFAPVTSSTPPDSPGGQADSNASSQTPATTTDSTTRQSPRKQSQQTNTKGRRYGRRPSSRTRRTTQTRQRRRSRSKSKSKSRSRSRSRHRSRSRSRSESPRRRSRYRSRSGSRGRVALRAITTTTTTTTRRAGGGSPTSTSSTTSQRSRQLRGGGRGGSRQRARGRRSSSTSPTPSKRSRGESESVRQHGISPSDVGTAVYTVSSRHTGRLGRLLDEALDPPVILVRGEPNTLKCFRNRAKQRYTGLYKSFSTAWSWVAGDGTERLGRSRMLISFISFSQRKDFDETVKYPKGVDRSFGSFDSL</sequence>
<evidence type="ECO:0000255" key="1">
    <source>
        <dbReference type="HAMAP-Rule" id="MF_04001"/>
    </source>
</evidence>
<evidence type="ECO:0000256" key="2">
    <source>
        <dbReference type="SAM" id="MobiDB-lite"/>
    </source>
</evidence>
<keyword id="KW-0010">Activator</keyword>
<keyword id="KW-0235">DNA replication</keyword>
<keyword id="KW-0238">DNA-binding</keyword>
<keyword id="KW-0244">Early protein</keyword>
<keyword id="KW-1048">Host nucleus</keyword>
<keyword id="KW-0597">Phosphoprotein</keyword>
<keyword id="KW-0678">Repressor</keyword>
<keyword id="KW-0804">Transcription</keyword>
<keyword id="KW-0805">Transcription regulation</keyword>
<accession>P50766</accession>